<proteinExistence type="inferred from homology"/>
<feature type="chain" id="PRO_1000021641" description="Nicotinate-nucleotide--dimethylbenzimidazole phosphoribosyltransferase">
    <location>
        <begin position="1"/>
        <end position="348"/>
    </location>
</feature>
<feature type="active site" description="Proton acceptor" evidence="1">
    <location>
        <position position="316"/>
    </location>
</feature>
<comment type="function">
    <text evidence="1">Catalyzes the synthesis of alpha-ribazole-5'-phosphate from nicotinate mononucleotide (NAMN) and 5,6-dimethylbenzimidazole (DMB).</text>
</comment>
<comment type="catalytic activity">
    <reaction evidence="1">
        <text>5,6-dimethylbenzimidazole + nicotinate beta-D-ribonucleotide = alpha-ribazole 5'-phosphate + nicotinate + H(+)</text>
        <dbReference type="Rhea" id="RHEA:11196"/>
        <dbReference type="ChEBI" id="CHEBI:15378"/>
        <dbReference type="ChEBI" id="CHEBI:15890"/>
        <dbReference type="ChEBI" id="CHEBI:32544"/>
        <dbReference type="ChEBI" id="CHEBI:57502"/>
        <dbReference type="ChEBI" id="CHEBI:57918"/>
        <dbReference type="EC" id="2.4.2.21"/>
    </reaction>
</comment>
<comment type="pathway">
    <text evidence="1">Nucleoside biosynthesis; alpha-ribazole biosynthesis; alpha-ribazole from 5,6-dimethylbenzimidazole: step 1/2.</text>
</comment>
<comment type="similarity">
    <text evidence="1">Belongs to the CobT family.</text>
</comment>
<dbReference type="EC" id="2.4.2.21" evidence="1"/>
<dbReference type="EMBL" id="CP000050">
    <property type="protein sequence ID" value="AAY48169.1"/>
    <property type="molecule type" value="Genomic_DNA"/>
</dbReference>
<dbReference type="RefSeq" id="WP_011038174.1">
    <property type="nucleotide sequence ID" value="NZ_CP155948.1"/>
</dbReference>
<dbReference type="SMR" id="Q4UXQ4"/>
<dbReference type="KEGG" id="xcb:XC_1099"/>
<dbReference type="HOGENOM" id="CLU_002982_0_0_6"/>
<dbReference type="UniPathway" id="UPA00061">
    <property type="reaction ID" value="UER00516"/>
</dbReference>
<dbReference type="Proteomes" id="UP000000420">
    <property type="component" value="Chromosome"/>
</dbReference>
<dbReference type="GO" id="GO:0008939">
    <property type="term" value="F:nicotinate-nucleotide-dimethylbenzimidazole phosphoribosyltransferase activity"/>
    <property type="evidence" value="ECO:0007669"/>
    <property type="project" value="UniProtKB-UniRule"/>
</dbReference>
<dbReference type="GO" id="GO:0009236">
    <property type="term" value="P:cobalamin biosynthetic process"/>
    <property type="evidence" value="ECO:0007669"/>
    <property type="project" value="UniProtKB-KW"/>
</dbReference>
<dbReference type="CDD" id="cd02439">
    <property type="entry name" value="DMB-PRT_CobT"/>
    <property type="match status" value="1"/>
</dbReference>
<dbReference type="FunFam" id="3.40.50.10210:FF:000001">
    <property type="entry name" value="Nicotinate-nucleotide--dimethylbenzimidazole phosphoribosyltransferase"/>
    <property type="match status" value="1"/>
</dbReference>
<dbReference type="Gene3D" id="1.10.1610.10">
    <property type="match status" value="1"/>
</dbReference>
<dbReference type="Gene3D" id="3.40.50.10210">
    <property type="match status" value="1"/>
</dbReference>
<dbReference type="HAMAP" id="MF_00230">
    <property type="entry name" value="CobT"/>
    <property type="match status" value="1"/>
</dbReference>
<dbReference type="InterPro" id="IPR003200">
    <property type="entry name" value="Nict_dMeBzImd_PRibTrfase"/>
</dbReference>
<dbReference type="InterPro" id="IPR017846">
    <property type="entry name" value="Nict_dMeBzImd_PRibTrfase_bact"/>
</dbReference>
<dbReference type="InterPro" id="IPR023195">
    <property type="entry name" value="Nict_dMeBzImd_PRibTrfase_N"/>
</dbReference>
<dbReference type="InterPro" id="IPR036087">
    <property type="entry name" value="Nict_dMeBzImd_PRibTrfase_sf"/>
</dbReference>
<dbReference type="NCBIfam" id="TIGR03160">
    <property type="entry name" value="cobT_DBIPRT"/>
    <property type="match status" value="1"/>
</dbReference>
<dbReference type="NCBIfam" id="NF000996">
    <property type="entry name" value="PRK00105.1"/>
    <property type="match status" value="1"/>
</dbReference>
<dbReference type="PANTHER" id="PTHR43463">
    <property type="entry name" value="NICOTINATE-NUCLEOTIDE--DIMETHYLBENZIMIDAZOLE PHOSPHORIBOSYLTRANSFERASE"/>
    <property type="match status" value="1"/>
</dbReference>
<dbReference type="PANTHER" id="PTHR43463:SF1">
    <property type="entry name" value="NICOTINATE-NUCLEOTIDE--DIMETHYLBENZIMIDAZOLE PHOSPHORIBOSYLTRANSFERASE"/>
    <property type="match status" value="1"/>
</dbReference>
<dbReference type="Pfam" id="PF02277">
    <property type="entry name" value="DBI_PRT"/>
    <property type="match status" value="1"/>
</dbReference>
<dbReference type="SUPFAM" id="SSF52733">
    <property type="entry name" value="Nicotinate mononucleotide:5,6-dimethylbenzimidazole phosphoribosyltransferase (CobT)"/>
    <property type="match status" value="1"/>
</dbReference>
<keyword id="KW-0169">Cobalamin biosynthesis</keyword>
<keyword id="KW-0328">Glycosyltransferase</keyword>
<keyword id="KW-0808">Transferase</keyword>
<accession>Q4UXQ4</accession>
<sequence length="348" mass="35999">MSIEWIQGACAVPDARVQAASLARQEQLTKPPGALGRLEQLAVQFAAWQRNEQPTVQRIWIAVYAADHGVAAEGVSMFPQAVTGEMVRNFARGGAAIAVLARELGARLEVVNLGVVNDPGELPRVRRAWIAPACANICEQAAMTPAQLRDALAAGAESIAQARTCGTQLFVGGEMGIGNSTAAAALSCALLSQFPQAMAGAGTGLDAEGIAHKATVITRALAVHADAATPLERLRRLGGFEIAALVGAYIAAAQAGIPVLVDGFISTAAALVAVHLNPGVREWLLFGHRSQERGHAALLRALEAEPLLQLDLRLGEASGAAVAIPLLRTACALHNGMATFAEAGVSDA</sequence>
<evidence type="ECO:0000255" key="1">
    <source>
        <dbReference type="HAMAP-Rule" id="MF_00230"/>
    </source>
</evidence>
<name>COBT_XANC8</name>
<organism>
    <name type="scientific">Xanthomonas campestris pv. campestris (strain 8004)</name>
    <dbReference type="NCBI Taxonomy" id="314565"/>
    <lineage>
        <taxon>Bacteria</taxon>
        <taxon>Pseudomonadati</taxon>
        <taxon>Pseudomonadota</taxon>
        <taxon>Gammaproteobacteria</taxon>
        <taxon>Lysobacterales</taxon>
        <taxon>Lysobacteraceae</taxon>
        <taxon>Xanthomonas</taxon>
    </lineage>
</organism>
<gene>
    <name evidence="1" type="primary">cobT</name>
    <name type="ordered locus">XC_1099</name>
</gene>
<protein>
    <recommendedName>
        <fullName evidence="1">Nicotinate-nucleotide--dimethylbenzimidazole phosphoribosyltransferase</fullName>
        <shortName evidence="1">NN:DBI PRT</shortName>
        <ecNumber evidence="1">2.4.2.21</ecNumber>
    </recommendedName>
    <alternativeName>
        <fullName evidence="1">N(1)-alpha-phosphoribosyltransferase</fullName>
    </alternativeName>
</protein>
<reference key="1">
    <citation type="journal article" date="2005" name="Genome Res.">
        <title>Comparative and functional genomic analyses of the pathogenicity of phytopathogen Xanthomonas campestris pv. campestris.</title>
        <authorList>
            <person name="Qian W."/>
            <person name="Jia Y."/>
            <person name="Ren S.-X."/>
            <person name="He Y.-Q."/>
            <person name="Feng J.-X."/>
            <person name="Lu L.-F."/>
            <person name="Sun Q."/>
            <person name="Ying G."/>
            <person name="Tang D.-J."/>
            <person name="Tang H."/>
            <person name="Wu W."/>
            <person name="Hao P."/>
            <person name="Wang L."/>
            <person name="Jiang B.-L."/>
            <person name="Zeng S."/>
            <person name="Gu W.-Y."/>
            <person name="Lu G."/>
            <person name="Rong L."/>
            <person name="Tian Y."/>
            <person name="Yao Z."/>
            <person name="Fu G."/>
            <person name="Chen B."/>
            <person name="Fang R."/>
            <person name="Qiang B."/>
            <person name="Chen Z."/>
            <person name="Zhao G.-P."/>
            <person name="Tang J.-L."/>
            <person name="He C."/>
        </authorList>
    </citation>
    <scope>NUCLEOTIDE SEQUENCE [LARGE SCALE GENOMIC DNA]</scope>
    <source>
        <strain>8004</strain>
    </source>
</reference>